<accession>P70905</accession>
<reference evidence="9" key="1">
    <citation type="submission" date="1996-03" db="EMBL/GenBank/DDBJ databases">
        <authorList>
            <person name="Restrepo B.I."/>
            <person name="Carter C.J."/>
            <person name="Infante D."/>
            <person name="Barbour A.G."/>
        </authorList>
    </citation>
    <scope>NUCLEOTIDE SEQUENCE [GENOMIC DNA]</scope>
    <source>
        <strain>ATCC 35209 / HS1</strain>
    </source>
</reference>
<reference evidence="7" key="2">
    <citation type="journal article" date="1998" name="Infect. Immun.">
        <title>Population structure of the relapsing fever spirochete Borrelia hermsii as indicated by polymorphism of two multigene families that encode immunogenic outer surface lipoproteins.</title>
        <authorList>
            <person name="Hinnebusch B.J."/>
            <person name="Barbour A.G."/>
            <person name="Restrepo B.I."/>
            <person name="Schwan T.G."/>
        </authorList>
    </citation>
    <scope>NOMENCLATURE</scope>
</reference>
<comment type="function">
    <text evidence="1">The Vlp and Vsp proteins are antigenically distinct proteins, only one vlp or vsp gene is transcriptionally active at any one time. Switching between these genes is a mechanism of host immune response evasion.</text>
</comment>
<comment type="subcellular location">
    <subcellularLocation>
        <location evidence="1">Cell outer membrane</location>
        <topology>Lipid-anchor</topology>
    </subcellularLocation>
</comment>
<comment type="miscellaneous">
    <text evidence="8">Genes for both Vlp and Vsp families are on (usually) unnamed linear plasmids in B.hermsii HS1.</text>
</comment>
<comment type="similarity">
    <text evidence="4">Belongs to the variable large protein (Vlp) family. Beta subfamily.</text>
</comment>
<protein>
    <recommendedName>
        <fullName evidence="5">Variable large protein 14</fullName>
    </recommendedName>
</protein>
<name>VLP14_BORHE</name>
<geneLocation type="plasmid" evidence="4"/>
<keyword id="KW-0998">Cell outer membrane</keyword>
<keyword id="KW-0449">Lipoprotein</keyword>
<keyword id="KW-0472">Membrane</keyword>
<keyword id="KW-0564">Palmitate</keyword>
<keyword id="KW-0614">Plasmid</keyword>
<keyword id="KW-0732">Signal</keyword>
<gene>
    <name evidence="5" type="primary">vlp14</name>
    <name evidence="6" type="synonym">vmp14</name>
</gene>
<sequence length="360" mass="36530">MRKRISAIIMTLFMVLASCSNQLEAEKLAAESKNTFFDSLVKIGQGFQDIFGIFGNAIGDALGFNAVKSGDKKSKIGEHFKKIGDGLTTTKDKLNELSGEISEAKNANGSSIEAVKSAINSASDVFEQLITALTKLAGVAKEAGSTDIGDTASAAALARDKDGVEAIIAGIKAIIDVADKSGVNIEKGNAGGPVNAAANTDAPAALAANAAAGANSTAKLAAEVTKADPWAMIDKINSAKAAVGVQLDANTNYGAGELATGTPNQANGSKAATNADLAAAVALKAMAKGGKFSHAANEDGAVKAAAVSAVNKVLGVLDFIIRKTVSSNLDKIREAVKGIKYSEITETDATESGDAQPTTK</sequence>
<feature type="signal peptide" evidence="3">
    <location>
        <begin position="1"/>
        <end position="18"/>
    </location>
</feature>
<feature type="chain" id="PRO_0000244504" description="Variable large protein 14" evidence="2">
    <location>
        <begin position="19"/>
        <end position="360"/>
    </location>
</feature>
<feature type="lipid moiety-binding region" description="N-palmitoyl cysteine" evidence="2 7">
    <location>
        <position position="19"/>
    </location>
</feature>
<feature type="lipid moiety-binding region" description="S-diacylglycerol cysteine" evidence="2 7">
    <location>
        <position position="19"/>
    </location>
</feature>
<organism>
    <name type="scientific">Borrelia hermsii</name>
    <dbReference type="NCBI Taxonomy" id="140"/>
    <lineage>
        <taxon>Bacteria</taxon>
        <taxon>Pseudomonadati</taxon>
        <taxon>Spirochaetota</taxon>
        <taxon>Spirochaetia</taxon>
        <taxon>Spirochaetales</taxon>
        <taxon>Borreliaceae</taxon>
        <taxon>Borrelia</taxon>
    </lineage>
</organism>
<evidence type="ECO:0000250" key="1">
    <source>
        <dbReference type="UniProtKB" id="P21875"/>
    </source>
</evidence>
<evidence type="ECO:0000255" key="2"/>
<evidence type="ECO:0000255" key="3">
    <source>
        <dbReference type="PROSITE-ProRule" id="PRU00303"/>
    </source>
</evidence>
<evidence type="ECO:0000269" key="4">
    <source>
    </source>
</evidence>
<evidence type="ECO:0000303" key="5">
    <source>
    </source>
</evidence>
<evidence type="ECO:0000303" key="6">
    <source ref="1"/>
</evidence>
<evidence type="ECO:0000305" key="7"/>
<evidence type="ECO:0000305" key="8">
    <source>
    </source>
</evidence>
<evidence type="ECO:0000312" key="9">
    <source>
        <dbReference type="EMBL" id="AAB17738.1"/>
    </source>
</evidence>
<dbReference type="EMBL" id="U52148">
    <property type="protein sequence ID" value="AAB17738.1"/>
    <property type="molecule type" value="Genomic_DNA"/>
</dbReference>
<dbReference type="SMR" id="P70905"/>
<dbReference type="GO" id="GO:0009279">
    <property type="term" value="C:cell outer membrane"/>
    <property type="evidence" value="ECO:0007669"/>
    <property type="project" value="UniProtKB-SubCell"/>
</dbReference>
<dbReference type="InterPro" id="IPR000680">
    <property type="entry name" value="Borrelia_lipo"/>
</dbReference>
<dbReference type="Pfam" id="PF00921">
    <property type="entry name" value="Lipoprotein_2"/>
    <property type="match status" value="1"/>
</dbReference>
<dbReference type="SUPFAM" id="SSF74748">
    <property type="entry name" value="Variable surface antigen VlsE"/>
    <property type="match status" value="1"/>
</dbReference>
<dbReference type="PROSITE" id="PS51257">
    <property type="entry name" value="PROKAR_LIPOPROTEIN"/>
    <property type="match status" value="1"/>
</dbReference>
<proteinExistence type="inferred from homology"/>